<protein>
    <recommendedName>
        <fullName evidence="3">Paulistine</fullName>
    </recommendedName>
</protein>
<comment type="function">
    <text evidence="1 2">Induces transient hyperalgesia and paw edema in mice (PubMed:24007897, PubMed:26938560). Probably exerts its effects via different pathways in an oxidation state-dependent way (PubMed:26938560).</text>
</comment>
<comment type="PTM">
    <text evidence="1">Occurs in oxidized and reduced states which are thought to adopt a compact globular and linear structure, respectively.</text>
</comment>
<comment type="mass spectrometry">
    <text>Oxidized.</text>
</comment>
<comment type="mass spectrometry">
    <text>Reduced.</text>
</comment>
<comment type="similarity">
    <text evidence="4">Belongs to the sylv/frat/paul family.</text>
</comment>
<feature type="peptide" id="PRO_0000441219" description="Paulistine" evidence="1">
    <location>
        <begin position="1"/>
        <end position="21"/>
    </location>
</feature>
<feature type="modified residue" description="Threonine amide" evidence="1">
    <location>
        <position position="21"/>
    </location>
</feature>
<feature type="disulfide bond" description="Partial" evidence="1">
    <location>
        <begin position="7"/>
        <end position="14"/>
    </location>
</feature>
<name>PSTN_POLPI</name>
<reference evidence="4" key="1">
    <citation type="journal article" date="2014" name="Biochim. Biophys. Acta">
        <title>Structure-function relationships of the peptide Paulistine: a novel toxin from the venom of the social wasp Polybia paulista.</title>
        <authorList>
            <person name="Gomes P.C."/>
            <person name="de Souza B.M."/>
            <person name="Dias N.B."/>
            <person name="Brigatte P."/>
            <person name="Mourelle D."/>
            <person name="Arcuri H.A."/>
            <person name="dos Santos Cabrera M.P."/>
            <person name="Stabeli R.G."/>
            <person name="Neto J.R."/>
            <person name="Palma M.S."/>
        </authorList>
    </citation>
    <scope>PROTEIN SEQUENCE</scope>
    <scope>FUNCTION</scope>
    <scope>MASS SPECTROMETRY</scope>
    <scope>DISULFIDE BOND</scope>
    <scope>AMIDATION AT THR-21</scope>
    <source>
        <tissue evidence="3">Venom</tissue>
    </source>
</reference>
<reference evidence="4" key="2">
    <citation type="journal article" date="2016" name="Toxins">
        <title>Paulistine--The Functional Duality of a Wasp Venom Peptide Toxin.</title>
        <authorList>
            <person name="Arcuri H.A."/>
            <person name="Gomes P.C."/>
            <person name="de Souza B.M."/>
            <person name="Dias N.B."/>
            <person name="Brigatte P."/>
            <person name="Stabeli R.G."/>
            <person name="Palma M.S."/>
        </authorList>
    </citation>
    <scope>FUNCTION</scope>
</reference>
<proteinExistence type="evidence at protein level"/>
<evidence type="ECO:0000269" key="1">
    <source>
    </source>
</evidence>
<evidence type="ECO:0000269" key="2">
    <source>
    </source>
</evidence>
<evidence type="ECO:0000303" key="3">
    <source>
    </source>
</evidence>
<evidence type="ECO:0000305" key="4"/>
<organism evidence="3">
    <name type="scientific">Polybia paulista</name>
    <name type="common">Neotropical social wasp</name>
    <name type="synonym">Swarm-founding polistine wasp</name>
    <dbReference type="NCBI Taxonomy" id="291283"/>
    <lineage>
        <taxon>Eukaryota</taxon>
        <taxon>Metazoa</taxon>
        <taxon>Ecdysozoa</taxon>
        <taxon>Arthropoda</taxon>
        <taxon>Hexapoda</taxon>
        <taxon>Insecta</taxon>
        <taxon>Pterygota</taxon>
        <taxon>Neoptera</taxon>
        <taxon>Endopterygota</taxon>
        <taxon>Hymenoptera</taxon>
        <taxon>Apocrita</taxon>
        <taxon>Aculeata</taxon>
        <taxon>Vespoidea</taxon>
        <taxon>Vespidae</taxon>
        <taxon>Polistinae</taxon>
        <taxon>Epiponini</taxon>
        <taxon>Polybia</taxon>
    </lineage>
</organism>
<sequence>SIKDKICKIIQAQCGKKLPFT</sequence>
<dbReference type="GO" id="GO:0090729">
    <property type="term" value="F:toxin activity"/>
    <property type="evidence" value="ECO:0007669"/>
    <property type="project" value="UniProtKB-KW"/>
</dbReference>
<accession>C0HKQ9</accession>
<keyword id="KW-0027">Amidation</keyword>
<keyword id="KW-0903">Direct protein sequencing</keyword>
<keyword id="KW-1015">Disulfide bond</keyword>
<keyword id="KW-0800">Toxin</keyword>